<sequence length="201" mass="22429">MKPVTCCNQKNNIMPSLVPVCCSEKKIESDAKKSISKCCGDKEIYDSENRPITKEDGSWIPGSCKQCRSDPHSRNFCQSLSNKCSSSSFSSNSALSPDLNEQQTDVNYNSIKLPEICSCKNAQMNAASDAKRYLPISYTYQKIRQHMQKNKSIQEQLNPEDSTSISSALENIASGLHVRGQKVELQSIKDALHKMDKNVLE</sequence>
<accession>Q08187</accession>
<accession>D6W236</accession>
<comment type="subunit">
    <text evidence="1">Interacts with the chaperones HSP82 and HSC82.</text>
</comment>
<name>YO029_YEAST</name>
<organism>
    <name type="scientific">Saccharomyces cerevisiae (strain ATCC 204508 / S288c)</name>
    <name type="common">Baker's yeast</name>
    <dbReference type="NCBI Taxonomy" id="559292"/>
    <lineage>
        <taxon>Eukaryota</taxon>
        <taxon>Fungi</taxon>
        <taxon>Dikarya</taxon>
        <taxon>Ascomycota</taxon>
        <taxon>Saccharomycotina</taxon>
        <taxon>Saccharomycetes</taxon>
        <taxon>Saccharomycetales</taxon>
        <taxon>Saccharomycetaceae</taxon>
        <taxon>Saccharomyces</taxon>
    </lineage>
</organism>
<evidence type="ECO:0000269" key="1">
    <source>
    </source>
</evidence>
<proteinExistence type="evidence at protein level"/>
<dbReference type="EMBL" id="Z74771">
    <property type="protein sequence ID" value="CAA99029.1"/>
    <property type="molecule type" value="Genomic_DNA"/>
</dbReference>
<dbReference type="EMBL" id="AY558425">
    <property type="protein sequence ID" value="AAS56751.1"/>
    <property type="molecule type" value="Genomic_DNA"/>
</dbReference>
<dbReference type="EMBL" id="BK006948">
    <property type="protein sequence ID" value="DAA10752.1"/>
    <property type="molecule type" value="Genomic_DNA"/>
</dbReference>
<dbReference type="PIR" id="S66712">
    <property type="entry name" value="S66712"/>
</dbReference>
<dbReference type="RefSeq" id="NP_014613.1">
    <property type="nucleotide sequence ID" value="NM_001183283.1"/>
</dbReference>
<dbReference type="BioGRID" id="34371">
    <property type="interactions" value="92"/>
</dbReference>
<dbReference type="FunCoup" id="Q08187">
    <property type="interactions" value="28"/>
</dbReference>
<dbReference type="STRING" id="4932.YOL029C"/>
<dbReference type="PaxDb" id="4932-YOL029C"/>
<dbReference type="PeptideAtlas" id="Q08187"/>
<dbReference type="EnsemblFungi" id="YOL029C_mRNA">
    <property type="protein sequence ID" value="YOL029C"/>
    <property type="gene ID" value="YOL029C"/>
</dbReference>
<dbReference type="GeneID" id="854128"/>
<dbReference type="KEGG" id="sce:YOL029C"/>
<dbReference type="AGR" id="SGD:S000005389"/>
<dbReference type="SGD" id="S000005389">
    <property type="gene designation" value="YOL029C"/>
</dbReference>
<dbReference type="VEuPathDB" id="FungiDB:YOL029C"/>
<dbReference type="HOGENOM" id="CLU_117319_0_0_1"/>
<dbReference type="InParanoid" id="Q08187"/>
<dbReference type="OMA" id="PEICSCK"/>
<dbReference type="OrthoDB" id="4048115at2759"/>
<dbReference type="BioCyc" id="YEAST:G3O-33445-MONOMER"/>
<dbReference type="BioGRID-ORCS" id="854128">
    <property type="hits" value="0 hits in 10 CRISPR screens"/>
</dbReference>
<dbReference type="PRO" id="PR:Q08187"/>
<dbReference type="Proteomes" id="UP000002311">
    <property type="component" value="Chromosome XV"/>
</dbReference>
<dbReference type="RNAct" id="Q08187">
    <property type="molecule type" value="protein"/>
</dbReference>
<reference key="1">
    <citation type="journal article" date="1997" name="Nature">
        <title>The nucleotide sequence of Saccharomyces cerevisiae chromosome XV.</title>
        <authorList>
            <person name="Dujon B."/>
            <person name="Albermann K."/>
            <person name="Aldea M."/>
            <person name="Alexandraki D."/>
            <person name="Ansorge W."/>
            <person name="Arino J."/>
            <person name="Benes V."/>
            <person name="Bohn C."/>
            <person name="Bolotin-Fukuhara M."/>
            <person name="Bordonne R."/>
            <person name="Boyer J."/>
            <person name="Camasses A."/>
            <person name="Casamayor A."/>
            <person name="Casas C."/>
            <person name="Cheret G."/>
            <person name="Cziepluch C."/>
            <person name="Daignan-Fornier B."/>
            <person name="Dang V.-D."/>
            <person name="de Haan M."/>
            <person name="Delius H."/>
            <person name="Durand P."/>
            <person name="Fairhead C."/>
            <person name="Feldmann H."/>
            <person name="Gaillon L."/>
            <person name="Galisson F."/>
            <person name="Gamo F.-J."/>
            <person name="Gancedo C."/>
            <person name="Goffeau A."/>
            <person name="Goulding S.E."/>
            <person name="Grivell L.A."/>
            <person name="Habbig B."/>
            <person name="Hand N.J."/>
            <person name="Hani J."/>
            <person name="Hattenhorst U."/>
            <person name="Hebling U."/>
            <person name="Hernando Y."/>
            <person name="Herrero E."/>
            <person name="Heumann K."/>
            <person name="Hiesel R."/>
            <person name="Hilger F."/>
            <person name="Hofmann B."/>
            <person name="Hollenberg C.P."/>
            <person name="Hughes B."/>
            <person name="Jauniaux J.-C."/>
            <person name="Kalogeropoulos A."/>
            <person name="Katsoulou C."/>
            <person name="Kordes E."/>
            <person name="Lafuente M.J."/>
            <person name="Landt O."/>
            <person name="Louis E.J."/>
            <person name="Maarse A.C."/>
            <person name="Madania A."/>
            <person name="Mannhaupt G."/>
            <person name="Marck C."/>
            <person name="Martin R.P."/>
            <person name="Mewes H.-W."/>
            <person name="Michaux G."/>
            <person name="Paces V."/>
            <person name="Parle-McDermott A.G."/>
            <person name="Pearson B.M."/>
            <person name="Perrin A."/>
            <person name="Pettersson B."/>
            <person name="Poch O."/>
            <person name="Pohl T.M."/>
            <person name="Poirey R."/>
            <person name="Portetelle D."/>
            <person name="Pujol A."/>
            <person name="Purnelle B."/>
            <person name="Ramezani Rad M."/>
            <person name="Rechmann S."/>
            <person name="Schwager C."/>
            <person name="Schweizer M."/>
            <person name="Sor F."/>
            <person name="Sterky F."/>
            <person name="Tarassov I.A."/>
            <person name="Teodoru C."/>
            <person name="Tettelin H."/>
            <person name="Thierry A."/>
            <person name="Tobiasch E."/>
            <person name="Tzermia M."/>
            <person name="Uhlen M."/>
            <person name="Unseld M."/>
            <person name="Valens M."/>
            <person name="Vandenbol M."/>
            <person name="Vetter I."/>
            <person name="Vlcek C."/>
            <person name="Voet M."/>
            <person name="Volckaert G."/>
            <person name="Voss H."/>
            <person name="Wambutt R."/>
            <person name="Wedler H."/>
            <person name="Wiemann S."/>
            <person name="Winsor B."/>
            <person name="Wolfe K.H."/>
            <person name="Zollner A."/>
            <person name="Zumstein E."/>
            <person name="Kleine K."/>
        </authorList>
    </citation>
    <scope>NUCLEOTIDE SEQUENCE [LARGE SCALE GENOMIC DNA]</scope>
    <source>
        <strain>ATCC 204508 / S288c</strain>
    </source>
</reference>
<reference key="2">
    <citation type="journal article" date="2014" name="G3 (Bethesda)">
        <title>The reference genome sequence of Saccharomyces cerevisiae: Then and now.</title>
        <authorList>
            <person name="Engel S.R."/>
            <person name="Dietrich F.S."/>
            <person name="Fisk D.G."/>
            <person name="Binkley G."/>
            <person name="Balakrishnan R."/>
            <person name="Costanzo M.C."/>
            <person name="Dwight S.S."/>
            <person name="Hitz B.C."/>
            <person name="Karra K."/>
            <person name="Nash R.S."/>
            <person name="Weng S."/>
            <person name="Wong E.D."/>
            <person name="Lloyd P."/>
            <person name="Skrzypek M.S."/>
            <person name="Miyasato S.R."/>
            <person name="Simison M."/>
            <person name="Cherry J.M."/>
        </authorList>
    </citation>
    <scope>GENOME REANNOTATION</scope>
    <source>
        <strain>ATCC 204508 / S288c</strain>
    </source>
</reference>
<reference key="3">
    <citation type="journal article" date="2007" name="Genome Res.">
        <title>Approaching a complete repository of sequence-verified protein-encoding clones for Saccharomyces cerevisiae.</title>
        <authorList>
            <person name="Hu Y."/>
            <person name="Rolfs A."/>
            <person name="Bhullar B."/>
            <person name="Murthy T.V.S."/>
            <person name="Zhu C."/>
            <person name="Berger M.F."/>
            <person name="Camargo A.A."/>
            <person name="Kelley F."/>
            <person name="McCarron S."/>
            <person name="Jepson D."/>
            <person name="Richardson A."/>
            <person name="Raphael J."/>
            <person name="Moreira D."/>
            <person name="Taycher E."/>
            <person name="Zuo D."/>
            <person name="Mohr S."/>
            <person name="Kane M.F."/>
            <person name="Williamson J."/>
            <person name="Simpson A.J.G."/>
            <person name="Bulyk M.L."/>
            <person name="Harlow E."/>
            <person name="Marsischky G."/>
            <person name="Kolodner R.D."/>
            <person name="LaBaer J."/>
        </authorList>
    </citation>
    <scope>NUCLEOTIDE SEQUENCE [GENOMIC DNA]</scope>
    <source>
        <strain>ATCC 204508 / S288c</strain>
    </source>
</reference>
<reference key="4">
    <citation type="journal article" date="2004" name="Cell Stress Chaperones">
        <title>Investigating the protein-protein interactions of the yeast Hsp90 chaperone system by two-hybrid analysis: potential uses and limitations of this approach.</title>
        <authorList>
            <person name="Millson S.H."/>
            <person name="Truman A.W."/>
            <person name="Wolfram F."/>
            <person name="King V."/>
            <person name="Panaretou B."/>
            <person name="Prodromou C."/>
            <person name="Pearl L.H."/>
            <person name="Piper P.W."/>
        </authorList>
    </citation>
    <scope>INTERACTION WITH HSP82 AND HSC82</scope>
</reference>
<keyword id="KW-1185">Reference proteome</keyword>
<feature type="chain" id="PRO_0000245275" description="Uncharacterized protein YOL029C">
    <location>
        <begin position="1"/>
        <end position="201"/>
    </location>
</feature>
<gene>
    <name type="ordered locus">YOL029C</name>
</gene>
<protein>
    <recommendedName>
        <fullName>Uncharacterized protein YOL029C</fullName>
    </recommendedName>
</protein>